<accession>C5CGW6</accession>
<gene>
    <name evidence="1" type="primary">dtd</name>
    <name type="ordered locus">Kole_1954</name>
</gene>
<evidence type="ECO:0000255" key="1">
    <source>
        <dbReference type="HAMAP-Rule" id="MF_00518"/>
    </source>
</evidence>
<comment type="function">
    <text evidence="1">An aminoacyl-tRNA editing enzyme that deacylates mischarged D-aminoacyl-tRNAs. Also deacylates mischarged glycyl-tRNA(Ala), protecting cells against glycine mischarging by AlaRS. Acts via tRNA-based rather than protein-based catalysis; rejects L-amino acids rather than detecting D-amino acids in the active site. By recycling D-aminoacyl-tRNA to D-amino acids and free tRNA molecules, this enzyme counteracts the toxicity associated with the formation of D-aminoacyl-tRNA entities in vivo and helps enforce protein L-homochirality.</text>
</comment>
<comment type="catalytic activity">
    <reaction evidence="1">
        <text>glycyl-tRNA(Ala) + H2O = tRNA(Ala) + glycine + H(+)</text>
        <dbReference type="Rhea" id="RHEA:53744"/>
        <dbReference type="Rhea" id="RHEA-COMP:9657"/>
        <dbReference type="Rhea" id="RHEA-COMP:13640"/>
        <dbReference type="ChEBI" id="CHEBI:15377"/>
        <dbReference type="ChEBI" id="CHEBI:15378"/>
        <dbReference type="ChEBI" id="CHEBI:57305"/>
        <dbReference type="ChEBI" id="CHEBI:78442"/>
        <dbReference type="ChEBI" id="CHEBI:78522"/>
        <dbReference type="EC" id="3.1.1.96"/>
    </reaction>
</comment>
<comment type="catalytic activity">
    <reaction evidence="1">
        <text>a D-aminoacyl-tRNA + H2O = a tRNA + a D-alpha-amino acid + H(+)</text>
        <dbReference type="Rhea" id="RHEA:13953"/>
        <dbReference type="Rhea" id="RHEA-COMP:10123"/>
        <dbReference type="Rhea" id="RHEA-COMP:10124"/>
        <dbReference type="ChEBI" id="CHEBI:15377"/>
        <dbReference type="ChEBI" id="CHEBI:15378"/>
        <dbReference type="ChEBI" id="CHEBI:59871"/>
        <dbReference type="ChEBI" id="CHEBI:78442"/>
        <dbReference type="ChEBI" id="CHEBI:79333"/>
        <dbReference type="EC" id="3.1.1.96"/>
    </reaction>
</comment>
<comment type="subunit">
    <text evidence="1">Homodimer.</text>
</comment>
<comment type="subcellular location">
    <subcellularLocation>
        <location evidence="1">Cytoplasm</location>
    </subcellularLocation>
</comment>
<comment type="domain">
    <text evidence="1">A Gly-cisPro motif from one monomer fits into the active site of the other monomer to allow specific chiral rejection of L-amino acids.</text>
</comment>
<comment type="similarity">
    <text evidence="1">Belongs to the DTD family.</text>
</comment>
<protein>
    <recommendedName>
        <fullName evidence="1">D-aminoacyl-tRNA deacylase</fullName>
        <shortName evidence="1">DTD</shortName>
        <ecNumber evidence="1">3.1.1.96</ecNumber>
    </recommendedName>
    <alternativeName>
        <fullName evidence="1">Gly-tRNA(Ala) deacylase</fullName>
    </alternativeName>
</protein>
<proteinExistence type="inferred from homology"/>
<sequence length="148" mass="16600">MRAVVQRVSEAEVKVDGKIVGKISDGLMVLLGVQKDDTEKDLDWMLEKILNLRIFEDETGKMNLSLLEKGGQLMLVSQFTLLGDARKGRRPSFTEAAPPDKAKEIFDRFVKKASERVHVETGVFQAHMLVSLTNDGPVTILLDSRKQF</sequence>
<organism>
    <name type="scientific">Kosmotoga olearia (strain ATCC BAA-1733 / DSM 21960 / TBF 19.5.1)</name>
    <dbReference type="NCBI Taxonomy" id="521045"/>
    <lineage>
        <taxon>Bacteria</taxon>
        <taxon>Thermotogati</taxon>
        <taxon>Thermotogota</taxon>
        <taxon>Thermotogae</taxon>
        <taxon>Kosmotogales</taxon>
        <taxon>Kosmotogaceae</taxon>
        <taxon>Kosmotoga</taxon>
    </lineage>
</organism>
<name>DTD_KOSOT</name>
<reference key="1">
    <citation type="submission" date="2009-06" db="EMBL/GenBank/DDBJ databases">
        <title>Complete sequence of Thermotogales bacterium TBF 19.5.1.</title>
        <authorList>
            <consortium name="US DOE Joint Genome Institute"/>
            <person name="Lucas S."/>
            <person name="Copeland A."/>
            <person name="Lapidus A."/>
            <person name="Glavina del Rio T."/>
            <person name="Tice H."/>
            <person name="Bruce D."/>
            <person name="Goodwin L."/>
            <person name="Pitluck S."/>
            <person name="Chertkov O."/>
            <person name="Brettin T."/>
            <person name="Detter J.C."/>
            <person name="Han C."/>
            <person name="Schmutz J."/>
            <person name="Larimer F."/>
            <person name="Land M."/>
            <person name="Hauser L."/>
            <person name="Kyrpides N."/>
            <person name="Ovchinnikova G."/>
            <person name="Noll K."/>
        </authorList>
    </citation>
    <scope>NUCLEOTIDE SEQUENCE [LARGE SCALE GENOMIC DNA]</scope>
    <source>
        <strain>ATCC BAA-1733 / DSM 21960 / TBF 19.5.1</strain>
    </source>
</reference>
<feature type="chain" id="PRO_1000211732" description="D-aminoacyl-tRNA deacylase">
    <location>
        <begin position="1"/>
        <end position="148"/>
    </location>
</feature>
<feature type="short sequence motif" description="Gly-cisPro motif, important for rejection of L-amino acids" evidence="1">
    <location>
        <begin position="136"/>
        <end position="137"/>
    </location>
</feature>
<dbReference type="EC" id="3.1.1.96" evidence="1"/>
<dbReference type="EMBL" id="CP001634">
    <property type="protein sequence ID" value="ACR80635.1"/>
    <property type="molecule type" value="Genomic_DNA"/>
</dbReference>
<dbReference type="RefSeq" id="WP_015869278.1">
    <property type="nucleotide sequence ID" value="NC_012785.1"/>
</dbReference>
<dbReference type="SMR" id="C5CGW6"/>
<dbReference type="STRING" id="521045.Kole_1954"/>
<dbReference type="KEGG" id="kol:Kole_1954"/>
<dbReference type="eggNOG" id="COG1490">
    <property type="taxonomic scope" value="Bacteria"/>
</dbReference>
<dbReference type="HOGENOM" id="CLU_076901_1_1_0"/>
<dbReference type="OrthoDB" id="9801395at2"/>
<dbReference type="Proteomes" id="UP000002382">
    <property type="component" value="Chromosome"/>
</dbReference>
<dbReference type="GO" id="GO:0005737">
    <property type="term" value="C:cytoplasm"/>
    <property type="evidence" value="ECO:0007669"/>
    <property type="project" value="UniProtKB-SubCell"/>
</dbReference>
<dbReference type="GO" id="GO:0051500">
    <property type="term" value="F:D-tyrosyl-tRNA(Tyr) deacylase activity"/>
    <property type="evidence" value="ECO:0007669"/>
    <property type="project" value="TreeGrafter"/>
</dbReference>
<dbReference type="GO" id="GO:0106026">
    <property type="term" value="F:Gly-tRNA(Ala) deacylase activity"/>
    <property type="evidence" value="ECO:0007669"/>
    <property type="project" value="UniProtKB-UniRule"/>
</dbReference>
<dbReference type="GO" id="GO:0043908">
    <property type="term" value="F:Ser(Gly)-tRNA(Ala) hydrolase activity"/>
    <property type="evidence" value="ECO:0007669"/>
    <property type="project" value="UniProtKB-UniRule"/>
</dbReference>
<dbReference type="GO" id="GO:0000049">
    <property type="term" value="F:tRNA binding"/>
    <property type="evidence" value="ECO:0007669"/>
    <property type="project" value="UniProtKB-UniRule"/>
</dbReference>
<dbReference type="GO" id="GO:0019478">
    <property type="term" value="P:D-amino acid catabolic process"/>
    <property type="evidence" value="ECO:0007669"/>
    <property type="project" value="UniProtKB-UniRule"/>
</dbReference>
<dbReference type="CDD" id="cd00563">
    <property type="entry name" value="Dtyr_deacylase"/>
    <property type="match status" value="1"/>
</dbReference>
<dbReference type="FunFam" id="3.50.80.10:FF:000001">
    <property type="entry name" value="D-aminoacyl-tRNA deacylase"/>
    <property type="match status" value="1"/>
</dbReference>
<dbReference type="Gene3D" id="3.50.80.10">
    <property type="entry name" value="D-tyrosyl-tRNA(Tyr) deacylase"/>
    <property type="match status" value="1"/>
</dbReference>
<dbReference type="HAMAP" id="MF_00518">
    <property type="entry name" value="Deacylase_Dtd"/>
    <property type="match status" value="1"/>
</dbReference>
<dbReference type="InterPro" id="IPR003732">
    <property type="entry name" value="Daa-tRNA_deacyls_DTD"/>
</dbReference>
<dbReference type="InterPro" id="IPR023509">
    <property type="entry name" value="DTD-like_sf"/>
</dbReference>
<dbReference type="NCBIfam" id="TIGR00256">
    <property type="entry name" value="D-aminoacyl-tRNA deacylase"/>
    <property type="match status" value="1"/>
</dbReference>
<dbReference type="PANTHER" id="PTHR10472:SF5">
    <property type="entry name" value="D-AMINOACYL-TRNA DEACYLASE 1"/>
    <property type="match status" value="1"/>
</dbReference>
<dbReference type="PANTHER" id="PTHR10472">
    <property type="entry name" value="D-TYROSYL-TRNA TYR DEACYLASE"/>
    <property type="match status" value="1"/>
</dbReference>
<dbReference type="Pfam" id="PF02580">
    <property type="entry name" value="Tyr_Deacylase"/>
    <property type="match status" value="1"/>
</dbReference>
<dbReference type="SUPFAM" id="SSF69500">
    <property type="entry name" value="DTD-like"/>
    <property type="match status" value="1"/>
</dbReference>
<keyword id="KW-0963">Cytoplasm</keyword>
<keyword id="KW-0378">Hydrolase</keyword>
<keyword id="KW-1185">Reference proteome</keyword>
<keyword id="KW-0694">RNA-binding</keyword>
<keyword id="KW-0820">tRNA-binding</keyword>